<evidence type="ECO:0000250" key="1"/>
<evidence type="ECO:0000255" key="2"/>
<evidence type="ECO:0000255" key="3">
    <source>
        <dbReference type="PROSITE-ProRule" id="PRU00231"/>
    </source>
</evidence>
<evidence type="ECO:0000305" key="4"/>
<name>SC22C_BOVIN</name>
<organism>
    <name type="scientific">Bos taurus</name>
    <name type="common">Bovine</name>
    <dbReference type="NCBI Taxonomy" id="9913"/>
    <lineage>
        <taxon>Eukaryota</taxon>
        <taxon>Metazoa</taxon>
        <taxon>Chordata</taxon>
        <taxon>Craniata</taxon>
        <taxon>Vertebrata</taxon>
        <taxon>Euteleostomi</taxon>
        <taxon>Mammalia</taxon>
        <taxon>Eutheria</taxon>
        <taxon>Laurasiatheria</taxon>
        <taxon>Artiodactyla</taxon>
        <taxon>Ruminantia</taxon>
        <taxon>Pecora</taxon>
        <taxon>Bovidae</taxon>
        <taxon>Bovinae</taxon>
        <taxon>Bos</taxon>
    </lineage>
</organism>
<reference key="1">
    <citation type="submission" date="2005-11" db="EMBL/GenBank/DDBJ databases">
        <authorList>
            <consortium name="NIH - Mammalian Gene Collection (MGC) project"/>
        </authorList>
    </citation>
    <scope>NUCLEOTIDE SEQUENCE [LARGE SCALE MRNA]</scope>
    <source>
        <strain>Crossbred X Angus</strain>
        <tissue>Liver</tissue>
    </source>
</reference>
<keyword id="KW-0256">Endoplasmic reticulum</keyword>
<keyword id="KW-0931">ER-Golgi transport</keyword>
<keyword id="KW-0472">Membrane</keyword>
<keyword id="KW-0653">Protein transport</keyword>
<keyword id="KW-1185">Reference proteome</keyword>
<keyword id="KW-0812">Transmembrane</keyword>
<keyword id="KW-1133">Transmembrane helix</keyword>
<keyword id="KW-0813">Transport</keyword>
<protein>
    <recommendedName>
        <fullName>Vesicle-trafficking protein SEC22c</fullName>
    </recommendedName>
    <alternativeName>
        <fullName>SEC22 vesicle-trafficking protein homolog C</fullName>
    </alternativeName>
</protein>
<dbReference type="EMBL" id="BC110195">
    <property type="protein sequence ID" value="AAI10196.1"/>
    <property type="molecule type" value="mRNA"/>
</dbReference>
<dbReference type="RefSeq" id="NP_001040011.1">
    <property type="nucleotide sequence ID" value="NM_001046546.2"/>
</dbReference>
<dbReference type="RefSeq" id="XP_010815828.1">
    <property type="nucleotide sequence ID" value="XM_010817526.4"/>
</dbReference>
<dbReference type="RefSeq" id="XP_010815830.1">
    <property type="nucleotide sequence ID" value="XM_010817528.4"/>
</dbReference>
<dbReference type="RefSeq" id="XP_010815831.1">
    <property type="nucleotide sequence ID" value="XM_010817529.4"/>
</dbReference>
<dbReference type="RefSeq" id="XP_010815833.1">
    <property type="nucleotide sequence ID" value="XM_010817531.2"/>
</dbReference>
<dbReference type="RefSeq" id="XP_010815834.1">
    <property type="nucleotide sequence ID" value="XM_010817532.1"/>
</dbReference>
<dbReference type="RefSeq" id="XP_024838777.1">
    <property type="nucleotide sequence ID" value="XM_024983009.2"/>
</dbReference>
<dbReference type="RefSeq" id="XP_059735835.1">
    <property type="nucleotide sequence ID" value="XM_059879852.1"/>
</dbReference>
<dbReference type="RefSeq" id="XP_059735836.1">
    <property type="nucleotide sequence ID" value="XM_059879853.1"/>
</dbReference>
<dbReference type="RefSeq" id="XP_059735837.1">
    <property type="nucleotide sequence ID" value="XM_059879854.1"/>
</dbReference>
<dbReference type="SMR" id="Q2YDJ2"/>
<dbReference type="FunCoup" id="Q2YDJ2">
    <property type="interactions" value="1129"/>
</dbReference>
<dbReference type="STRING" id="9913.ENSBTAP00000008631"/>
<dbReference type="PaxDb" id="9913-ENSBTAP00000008631"/>
<dbReference type="Ensembl" id="ENSBTAT00000008631.6">
    <property type="protein sequence ID" value="ENSBTAP00000008631.5"/>
    <property type="gene ID" value="ENSBTAG00000006570.7"/>
</dbReference>
<dbReference type="GeneID" id="614905"/>
<dbReference type="KEGG" id="bta:614905"/>
<dbReference type="CTD" id="9117"/>
<dbReference type="VEuPathDB" id="HostDB:ENSBTAG00000006570"/>
<dbReference type="VGNC" id="VGNC:34409">
    <property type="gene designation" value="SEC22C"/>
</dbReference>
<dbReference type="eggNOG" id="KOG0862">
    <property type="taxonomic scope" value="Eukaryota"/>
</dbReference>
<dbReference type="GeneTree" id="ENSGT00940000159338"/>
<dbReference type="HOGENOM" id="CLU_054453_0_0_1"/>
<dbReference type="InParanoid" id="Q2YDJ2"/>
<dbReference type="OMA" id="QDRTNDC"/>
<dbReference type="OrthoDB" id="1719357at2759"/>
<dbReference type="TreeFam" id="TF105933"/>
<dbReference type="Reactome" id="R-BTA-204005">
    <property type="pathway name" value="COPII-mediated vesicle transport"/>
</dbReference>
<dbReference type="Proteomes" id="UP000009136">
    <property type="component" value="Chromosome 22"/>
</dbReference>
<dbReference type="Bgee" id="ENSBTAG00000006570">
    <property type="expression patterns" value="Expressed in oocyte and 108 other cell types or tissues"/>
</dbReference>
<dbReference type="GO" id="GO:0005789">
    <property type="term" value="C:endoplasmic reticulum membrane"/>
    <property type="evidence" value="ECO:0007669"/>
    <property type="project" value="UniProtKB-SubCell"/>
</dbReference>
<dbReference type="GO" id="GO:0006888">
    <property type="term" value="P:endoplasmic reticulum to Golgi vesicle-mediated transport"/>
    <property type="evidence" value="ECO:0000318"/>
    <property type="project" value="GO_Central"/>
</dbReference>
<dbReference type="GO" id="GO:0015031">
    <property type="term" value="P:protein transport"/>
    <property type="evidence" value="ECO:0007669"/>
    <property type="project" value="UniProtKB-KW"/>
</dbReference>
<dbReference type="CDD" id="cd14824">
    <property type="entry name" value="Longin"/>
    <property type="match status" value="1"/>
</dbReference>
<dbReference type="FunFam" id="3.30.450.50:FF:000012">
    <property type="entry name" value="vesicle-trafficking protein SEC22c isoform X1"/>
    <property type="match status" value="1"/>
</dbReference>
<dbReference type="Gene3D" id="3.30.450.50">
    <property type="entry name" value="Longin domain"/>
    <property type="match status" value="1"/>
</dbReference>
<dbReference type="InterPro" id="IPR011012">
    <property type="entry name" value="Longin-like_dom_sf"/>
</dbReference>
<dbReference type="InterPro" id="IPR010908">
    <property type="entry name" value="Longin_dom"/>
</dbReference>
<dbReference type="InterPro" id="IPR043546">
    <property type="entry name" value="Sec22a/c"/>
</dbReference>
<dbReference type="PANTHER" id="PTHR46258">
    <property type="entry name" value="LONGIN DOMAIN-CONTAINING PROTEIN"/>
    <property type="match status" value="1"/>
</dbReference>
<dbReference type="PANTHER" id="PTHR46258:SF2">
    <property type="entry name" value="VESICLE-TRAFFICKING PROTEIN SEC22C"/>
    <property type="match status" value="1"/>
</dbReference>
<dbReference type="Pfam" id="PF13774">
    <property type="entry name" value="Longin"/>
    <property type="match status" value="1"/>
</dbReference>
<dbReference type="SMART" id="SM01270">
    <property type="entry name" value="Longin"/>
    <property type="match status" value="1"/>
</dbReference>
<dbReference type="SUPFAM" id="SSF64356">
    <property type="entry name" value="SNARE-like"/>
    <property type="match status" value="1"/>
</dbReference>
<dbReference type="PROSITE" id="PS50859">
    <property type="entry name" value="LONGIN"/>
    <property type="match status" value="1"/>
</dbReference>
<comment type="function">
    <text evidence="1">May be involved in vesicle transport between the ER and the Golgi complex.</text>
</comment>
<comment type="subcellular location">
    <subcellularLocation>
        <location evidence="1">Endoplasmic reticulum membrane</location>
        <topology evidence="1">Multi-pass membrane protein</topology>
    </subcellularLocation>
</comment>
<comment type="similarity">
    <text evidence="4">Belongs to the synaptobrevin family.</text>
</comment>
<sequence length="303" mass="34133">MSLILFACVVRVRDGLPLSASTDFYHSQDFLECRRRLKTLALRLAQYPGRGSAEGCDFSIHFSSSRDVACMAICSLQCPAAMAFCFLETLWWEFTASYDTTCVGLASRPYAFLEFDNVIQKVKWHFNYVSSTQMDSSLGKIQEELKFQPPVVLTLEDTDVANGVMNGHTLMHLEPAPSFRMEPVTALGILSLILNIMCAALNLIRGIHLAEHSLQVAHEEIGNILAFLIPFVACIFQCYLYLFYSPARTMKVVLMLLFICLGNVYLHGLRNLWQILFHIGVAFLSSHQILTRQLQDKQSDCGV</sequence>
<gene>
    <name type="primary">SEC22C</name>
</gene>
<feature type="chain" id="PRO_0000324160" description="Vesicle-trafficking protein SEC22c">
    <location>
        <begin position="1"/>
        <end position="303"/>
    </location>
</feature>
<feature type="topological domain" description="Cytoplasmic" evidence="2">
    <location>
        <begin position="1"/>
        <end position="183"/>
    </location>
</feature>
<feature type="transmembrane region" description="Helical" evidence="2">
    <location>
        <begin position="184"/>
        <end position="204"/>
    </location>
</feature>
<feature type="topological domain" description="Lumenal" evidence="2">
    <location>
        <begin position="205"/>
        <end position="223"/>
    </location>
</feature>
<feature type="transmembrane region" description="Helical" evidence="2">
    <location>
        <begin position="224"/>
        <end position="244"/>
    </location>
</feature>
<feature type="topological domain" description="Cytoplasmic" evidence="2">
    <location>
        <begin position="245"/>
        <end position="248"/>
    </location>
</feature>
<feature type="transmembrane region" description="Helical" evidence="2">
    <location>
        <begin position="249"/>
        <end position="269"/>
    </location>
</feature>
<feature type="topological domain" description="Lumenal" evidence="2">
    <location>
        <position position="270"/>
    </location>
</feature>
<feature type="transmembrane region" description="Helical" evidence="2">
    <location>
        <begin position="271"/>
        <end position="291"/>
    </location>
</feature>
<feature type="topological domain" description="Cytoplasmic" evidence="2">
    <location>
        <begin position="292"/>
        <end position="303"/>
    </location>
</feature>
<feature type="domain" description="Longin" evidence="3">
    <location>
        <begin position="8"/>
        <end position="119"/>
    </location>
</feature>
<proteinExistence type="evidence at transcript level"/>
<accession>Q2YDJ2</accession>